<organism>
    <name type="scientific">Halobacterium salinarum (strain ATCC 700922 / JCM 11081 / NRC-1)</name>
    <name type="common">Halobacterium halobium</name>
    <dbReference type="NCBI Taxonomy" id="64091"/>
    <lineage>
        <taxon>Archaea</taxon>
        <taxon>Methanobacteriati</taxon>
        <taxon>Methanobacteriota</taxon>
        <taxon>Stenosarchaea group</taxon>
        <taxon>Halobacteria</taxon>
        <taxon>Halobacteriales</taxon>
        <taxon>Halobacteriaceae</taxon>
        <taxon>Halobacterium</taxon>
        <taxon>Halobacterium salinarum NRC-34001</taxon>
    </lineage>
</organism>
<gene>
    <name evidence="1" type="primary">rps4</name>
    <name type="ordered locus">VNG_1133G</name>
</gene>
<dbReference type="EMBL" id="AB030282">
    <property type="protein sequence ID" value="BAA85896.1"/>
    <property type="molecule type" value="Genomic_DNA"/>
</dbReference>
<dbReference type="EMBL" id="AE004437">
    <property type="protein sequence ID" value="AAG19518.1"/>
    <property type="molecule type" value="Genomic_DNA"/>
</dbReference>
<dbReference type="PIR" id="B84269">
    <property type="entry name" value="B84269"/>
</dbReference>
<dbReference type="PIR" id="T43938">
    <property type="entry name" value="T43938"/>
</dbReference>
<dbReference type="RefSeq" id="WP_010902813.1">
    <property type="nucleotide sequence ID" value="NC_002607.1"/>
</dbReference>
<dbReference type="SMR" id="Q9HQJ6"/>
<dbReference type="FunCoup" id="Q9HQJ6">
    <property type="interactions" value="154"/>
</dbReference>
<dbReference type="STRING" id="64091.VNG_1133G"/>
<dbReference type="PaxDb" id="64091-VNG_1133G"/>
<dbReference type="KEGG" id="hal:VNG_1133G"/>
<dbReference type="PATRIC" id="fig|64091.14.peg.864"/>
<dbReference type="HOGENOM" id="CLU_089738_1_1_2"/>
<dbReference type="InParanoid" id="Q9HQJ6"/>
<dbReference type="OrthoDB" id="10429at2157"/>
<dbReference type="PhylomeDB" id="Q9HQJ6"/>
<dbReference type="Proteomes" id="UP000000554">
    <property type="component" value="Chromosome"/>
</dbReference>
<dbReference type="GO" id="GO:0015935">
    <property type="term" value="C:small ribosomal subunit"/>
    <property type="evidence" value="ECO:0000318"/>
    <property type="project" value="GO_Central"/>
</dbReference>
<dbReference type="GO" id="GO:0019843">
    <property type="term" value="F:rRNA binding"/>
    <property type="evidence" value="ECO:0000318"/>
    <property type="project" value="GO_Central"/>
</dbReference>
<dbReference type="GO" id="GO:0003735">
    <property type="term" value="F:structural constituent of ribosome"/>
    <property type="evidence" value="ECO:0000318"/>
    <property type="project" value="GO_Central"/>
</dbReference>
<dbReference type="GO" id="GO:0042274">
    <property type="term" value="P:ribosomal small subunit biogenesis"/>
    <property type="evidence" value="ECO:0000318"/>
    <property type="project" value="GO_Central"/>
</dbReference>
<dbReference type="GO" id="GO:0006412">
    <property type="term" value="P:translation"/>
    <property type="evidence" value="ECO:0007669"/>
    <property type="project" value="UniProtKB-UniRule"/>
</dbReference>
<dbReference type="CDD" id="cd00165">
    <property type="entry name" value="S4"/>
    <property type="match status" value="1"/>
</dbReference>
<dbReference type="Gene3D" id="1.10.1050.10">
    <property type="entry name" value="Ribosomal Protein S4 Delta 41, Chain A, domain 1"/>
    <property type="match status" value="1"/>
</dbReference>
<dbReference type="Gene3D" id="3.10.290.10">
    <property type="entry name" value="RNA-binding S4 domain"/>
    <property type="match status" value="1"/>
</dbReference>
<dbReference type="HAMAP" id="MF_01306_A">
    <property type="entry name" value="Ribosomal_uS4_A"/>
    <property type="match status" value="1"/>
</dbReference>
<dbReference type="InterPro" id="IPR022801">
    <property type="entry name" value="Ribosomal_uS4"/>
</dbReference>
<dbReference type="InterPro" id="IPR022802">
    <property type="entry name" value="Ribosomal_uS4_arc"/>
</dbReference>
<dbReference type="InterPro" id="IPR018079">
    <property type="entry name" value="Ribosomal_uS4_CS"/>
</dbReference>
<dbReference type="InterPro" id="IPR005710">
    <property type="entry name" value="Ribosomal_uS4_euk/arc"/>
</dbReference>
<dbReference type="InterPro" id="IPR001912">
    <property type="entry name" value="Ribosomal_uS4_N"/>
</dbReference>
<dbReference type="InterPro" id="IPR002942">
    <property type="entry name" value="S4_RNA-bd"/>
</dbReference>
<dbReference type="InterPro" id="IPR036986">
    <property type="entry name" value="S4_RNA-bd_sf"/>
</dbReference>
<dbReference type="NCBIfam" id="NF003139">
    <property type="entry name" value="PRK04051.1"/>
    <property type="match status" value="1"/>
</dbReference>
<dbReference type="NCBIfam" id="TIGR01018">
    <property type="entry name" value="uS4_arch"/>
    <property type="match status" value="1"/>
</dbReference>
<dbReference type="PANTHER" id="PTHR11831">
    <property type="entry name" value="30S 40S RIBOSOMAL PROTEIN"/>
    <property type="match status" value="1"/>
</dbReference>
<dbReference type="PANTHER" id="PTHR11831:SF5">
    <property type="entry name" value="40S RIBOSOMAL PROTEIN S9"/>
    <property type="match status" value="1"/>
</dbReference>
<dbReference type="Pfam" id="PF01479">
    <property type="entry name" value="S4"/>
    <property type="match status" value="1"/>
</dbReference>
<dbReference type="SMART" id="SM01390">
    <property type="entry name" value="Ribosomal_S4"/>
    <property type="match status" value="1"/>
</dbReference>
<dbReference type="SMART" id="SM00363">
    <property type="entry name" value="S4"/>
    <property type="match status" value="1"/>
</dbReference>
<dbReference type="SUPFAM" id="SSF55174">
    <property type="entry name" value="Alpha-L RNA-binding motif"/>
    <property type="match status" value="1"/>
</dbReference>
<dbReference type="PROSITE" id="PS00632">
    <property type="entry name" value="RIBOSOMAL_S4"/>
    <property type="match status" value="1"/>
</dbReference>
<dbReference type="PROSITE" id="PS50889">
    <property type="entry name" value="S4"/>
    <property type="match status" value="1"/>
</dbReference>
<feature type="chain" id="PRO_0000132506" description="Small ribosomal subunit protein uS4">
    <location>
        <begin position="1"/>
        <end position="170"/>
    </location>
</feature>
<feature type="domain" description="S4 RNA-binding" evidence="1">
    <location>
        <begin position="100"/>
        <end position="164"/>
    </location>
</feature>
<feature type="sequence conflict" description="In Ref. 1; BAA85896." evidence="2" ref="1">
    <original>ARR</original>
    <variation>RQ</variation>
    <location>
        <begin position="55"/>
        <end position="57"/>
    </location>
</feature>
<keyword id="KW-1185">Reference proteome</keyword>
<keyword id="KW-0687">Ribonucleoprotein</keyword>
<keyword id="KW-0689">Ribosomal protein</keyword>
<keyword id="KW-0694">RNA-binding</keyword>
<keyword id="KW-0699">rRNA-binding</keyword>
<comment type="function">
    <text evidence="1">One of the primary rRNA binding proteins, it binds directly to 16S rRNA where it nucleates assembly of the body of the 30S subunit.</text>
</comment>
<comment type="function">
    <text evidence="1">With S5 and S12 plays an important role in translational accuracy.</text>
</comment>
<comment type="subunit">
    <text evidence="1">Part of the 30S ribosomal subunit. Contacts protein S5. The interaction surface between S4 and S5 is involved in control of translational fidelity.</text>
</comment>
<comment type="similarity">
    <text evidence="1">Belongs to the universal ribosomal protein uS4 family.</text>
</comment>
<name>RS4_HALSA</name>
<proteinExistence type="inferred from homology"/>
<accession>Q9HQJ6</accession>
<accession>Q9V2W3</accession>
<evidence type="ECO:0000255" key="1">
    <source>
        <dbReference type="HAMAP-Rule" id="MF_01306"/>
    </source>
</evidence>
<evidence type="ECO:0000305" key="2"/>
<sequence length="170" mass="19323">MALPGENTKFYETPNHPYQGERIAEESDLLSRYGLKNKEELWRAQSELRDYRREARRLLGQTGTVSGEEFVARLQRIGILSEEERLDDVLSLEVTDVLERRLQTVVYREGLANTMGQARQFVSHGHVTVDGSRVTEPSYTVPVSEENTLAFDETSDLTDELHPARAGAQE</sequence>
<protein>
    <recommendedName>
        <fullName evidence="1">Small ribosomal subunit protein uS4</fullName>
    </recommendedName>
    <alternativeName>
        <fullName evidence="2">30S ribosomal protein S4</fullName>
    </alternativeName>
</protein>
<reference key="1">
    <citation type="journal article" date="1999" name="Biochem. Biophys. Res. Commun.">
        <title>Cloning, sequencing, and characterization of ribosomal protein and RNA polymerase genes from the region analogous to the alpha-operon of Escherichia coli in halophilic archaea, Halobacterium halobium.</title>
        <authorList>
            <person name="Sano K."/>
            <person name="Taguchi A."/>
            <person name="Furumoto H."/>
            <person name="Uda T."/>
            <person name="Itoh T."/>
        </authorList>
    </citation>
    <scope>NUCLEOTIDE SEQUENCE [GENOMIC DNA]</scope>
    <source>
        <strain>R1 / S9</strain>
    </source>
</reference>
<reference key="2">
    <citation type="journal article" date="2000" name="Proc. Natl. Acad. Sci. U.S.A.">
        <title>Genome sequence of Halobacterium species NRC-1.</title>
        <authorList>
            <person name="Ng W.V."/>
            <person name="Kennedy S.P."/>
            <person name="Mahairas G.G."/>
            <person name="Berquist B."/>
            <person name="Pan M."/>
            <person name="Shukla H.D."/>
            <person name="Lasky S.R."/>
            <person name="Baliga N.S."/>
            <person name="Thorsson V."/>
            <person name="Sbrogna J."/>
            <person name="Swartzell S."/>
            <person name="Weir D."/>
            <person name="Hall J."/>
            <person name="Dahl T.A."/>
            <person name="Welti R."/>
            <person name="Goo Y.A."/>
            <person name="Leithauser B."/>
            <person name="Keller K."/>
            <person name="Cruz R."/>
            <person name="Danson M.J."/>
            <person name="Hough D.W."/>
            <person name="Maddocks D.G."/>
            <person name="Jablonski P.E."/>
            <person name="Krebs M.P."/>
            <person name="Angevine C.M."/>
            <person name="Dale H."/>
            <person name="Isenbarger T.A."/>
            <person name="Peck R.F."/>
            <person name="Pohlschroder M."/>
            <person name="Spudich J.L."/>
            <person name="Jung K.-H."/>
            <person name="Alam M."/>
            <person name="Freitas T."/>
            <person name="Hou S."/>
            <person name="Daniels C.J."/>
            <person name="Dennis P.P."/>
            <person name="Omer A.D."/>
            <person name="Ebhardt H."/>
            <person name="Lowe T.M."/>
            <person name="Liang P."/>
            <person name="Riley M."/>
            <person name="Hood L."/>
            <person name="DasSarma S."/>
        </authorList>
    </citation>
    <scope>NUCLEOTIDE SEQUENCE [LARGE SCALE GENOMIC DNA]</scope>
    <source>
        <strain>ATCC 700922 / JCM 11081 / NRC-1</strain>
    </source>
</reference>